<sequence>MTEVISNKITAKDGATSLKDIDDKRWVWISDPETAFTKAWIKEDLPDKKYVVRYNNSRDEKIVGEDEIDPVNPAKFDRVNDMAELTYLNEPAVTYNLEQRYLSDQIYTYSGLFLVAVNPYCGLPIYTKDIIQLYKDKTQERKLPHVFAIADLAYNNLLENKENQSILVTGESGAGKTENTKRIIQYLAAIASSTTVGSSQVEEQIIKTNPVLESFGNARTVRNNNSSRFGKFIKVEFSLSGEISNAAIEWYLLEKSRVVHQNEFERNYHVFYQLLSGADTALKNKLLLTDNCNDYRYLKDSVHIIDGVDDKEEFKTLLAAFKTLGFDDKENFDLFNILSIILHMGNIDVGADRSGIARLLNPDEIDKLCHLLGVSPELFSQNLVRPRIKAGHEWVISARSQTQVISSIEALAKAIYERNFGWLVKRLNTSLNHSNAQSYFIGILDIAGFEIFEKNSFEQLCINYTNEKLQQFFNHHMFVLEQEEYMKEEIVWDFIDFGHDLQPTIDLIEKANPIGILSCLDEECVMPKATDATFTSKLDALWRNKSLKYKPFKFADQGFILTHYAADVPYSTEGWLEKNTDPLNENVAKLLAQSTNKHVATLFSDYQETETKTVRGRTKKGLFRTVAQRHKEQLNQLMNQFNSTQPHFIRCIVPNEEKKMHTFNRPLVLGQLRCNGVLEGIRITRAGFPNRLPFNDFRVRYEIMAHLPTGTYVESRRASVMILEELKIDEASYRIGVSKIFFKAGVLAELEERRVATLQRLMTMLQTRIRGFLQRKIFQKRLKDIQAIKLLQANLQVYNEFRTFPWAKLFFNLRPLLSSTQNDKQLKKRDAEIIELKYELKKQQNSKSEVERDLVETNNSLTAVENLLTTERAIALDKEEILRRTQERLANIEDSFSETKQQNENLQRESASLKQINNELESELLEKTSKVETLLSEQNELKEKLSLEEKDLLDTKGELESLRENNATVLSEKAEFNEQCKSLQETIVTKDAELDKLTKYISDYKTEIQEMRLTNQKMNEKSIQQEGSLSESLKRVKKLERENSTLISDVSILKQQKEELSVLKGVQELTINNLEEKVNYLEADVKQLPKLKKELESLNDKDQLYQLQATKNKELEAKVKECLNNIKSLTKELENKEEKCQNLSDASLKYIELQEIHENLLLKVSDLENYKKKYEGLQLDLEGLKDVDTNFQELSKKHRDLTFNHESLLRQSASYKEKLSLASSENKDLSNKVSSLTKQVNELSPKASKVPELERKITNLMHEYSQLGKTFEDEKRKALIASRDNEELRSLKSELESKRKLEVEYQKVLEEVKTTRSLRSEVTLLRNKVADHESIRSKLSEVEMKLVDTRKELNSALDSCKKREAEIHRLKEHRPSGKENNIPAVKTTEPVLKNIPQRKTIFDLQQRNANQALYENLKRDYDRLNLEKHNLEKQVNELKGAEVSPQPTGQSLQHVNLAHAIELKALKDQINSEKAKMFSVQVQYEKREQELQKRIASLEKVNKDSLIDVRALRDRIASLEDELRAA</sequence>
<feature type="chain" id="PRO_0000123480" description="Myosin type-2 heavy chain 1">
    <location>
        <begin position="1"/>
        <end position="1526"/>
    </location>
</feature>
<feature type="domain" description="Myosin N-terminal SH3-like" evidence="5">
    <location>
        <begin position="22"/>
        <end position="73"/>
    </location>
</feature>
<feature type="domain" description="Myosin motor" evidence="4">
    <location>
        <begin position="77"/>
        <end position="755"/>
    </location>
</feature>
<feature type="domain" description="IQ" evidence="3">
    <location>
        <begin position="758"/>
        <end position="787"/>
    </location>
</feature>
<feature type="region of interest" description="Actin-binding" evidence="1">
    <location>
        <begin position="634"/>
        <end position="656"/>
    </location>
</feature>
<feature type="region of interest" description="Actin-binding" evidence="1">
    <location>
        <begin position="734"/>
        <end position="748"/>
    </location>
</feature>
<feature type="coiled-coil region" evidence="2">
    <location>
        <begin position="875"/>
        <end position="1244"/>
    </location>
</feature>
<feature type="binding site" evidence="2">
    <location>
        <begin position="170"/>
        <end position="177"/>
    </location>
    <ligand>
        <name>ATP</name>
        <dbReference type="ChEBI" id="CHEBI:30616"/>
    </ligand>
</feature>
<feature type="modified residue" description="Phosphoserine" evidence="6">
    <location>
        <position position="1044"/>
    </location>
</feature>
<feature type="sequence conflict" description="In Ref. 1; AAC49908." evidence="8" ref="1">
    <original>S</original>
    <variation>R</variation>
    <location>
        <position position="1337"/>
    </location>
</feature>
<comment type="function">
    <text evidence="7">Required for cell division. It is a component of the cdc12 'spot', a structure thought to mark the site of septation. May work in conjunction with myo3.</text>
</comment>
<comment type="subunit">
    <text>Binds to cdc4 and rlc1.</text>
</comment>
<comment type="similarity">
    <text evidence="8">Belongs to the TRAFAC class myosin-kinesin ATPase superfamily. Myosin family.</text>
</comment>
<organism>
    <name type="scientific">Schizosaccharomyces pombe (strain 972 / ATCC 24843)</name>
    <name type="common">Fission yeast</name>
    <dbReference type="NCBI Taxonomy" id="284812"/>
    <lineage>
        <taxon>Eukaryota</taxon>
        <taxon>Fungi</taxon>
        <taxon>Dikarya</taxon>
        <taxon>Ascomycota</taxon>
        <taxon>Taphrinomycotina</taxon>
        <taxon>Schizosaccharomycetes</taxon>
        <taxon>Schizosaccharomycetales</taxon>
        <taxon>Schizosaccharomycetaceae</taxon>
        <taxon>Schizosaccharomyces</taxon>
    </lineage>
</organism>
<accession>Q9USI6</accession>
<accession>P78969</accession>
<dbReference type="EMBL" id="U75357">
    <property type="protein sequence ID" value="AAC49908.1"/>
    <property type="molecule type" value="Genomic_DNA"/>
</dbReference>
<dbReference type="EMBL" id="CU329672">
    <property type="protein sequence ID" value="CAB39901.1"/>
    <property type="molecule type" value="Genomic_DNA"/>
</dbReference>
<dbReference type="PIR" id="T41522">
    <property type="entry name" value="T41522"/>
</dbReference>
<dbReference type="RefSeq" id="NP_588114.1">
    <property type="nucleotide sequence ID" value="NM_001023104.2"/>
</dbReference>
<dbReference type="SMR" id="Q9USI6"/>
<dbReference type="BioGRID" id="276075">
    <property type="interactions" value="48"/>
</dbReference>
<dbReference type="FunCoup" id="Q9USI6">
    <property type="interactions" value="76"/>
</dbReference>
<dbReference type="STRING" id="284812.Q9USI6"/>
<dbReference type="iPTMnet" id="Q9USI6"/>
<dbReference type="PaxDb" id="4896-SPCC645.05c.1"/>
<dbReference type="EnsemblFungi" id="SPCC645.05c.1">
    <property type="protein sequence ID" value="SPCC645.05c.1:pep"/>
    <property type="gene ID" value="SPCC645.05c"/>
</dbReference>
<dbReference type="GeneID" id="2539513"/>
<dbReference type="KEGG" id="spo:2539513"/>
<dbReference type="PomBase" id="SPCC645.05c">
    <property type="gene designation" value="myo2"/>
</dbReference>
<dbReference type="VEuPathDB" id="FungiDB:SPCC645.05c"/>
<dbReference type="eggNOG" id="KOG0161">
    <property type="taxonomic scope" value="Eukaryota"/>
</dbReference>
<dbReference type="HOGENOM" id="CLU_000192_7_16_1"/>
<dbReference type="InParanoid" id="Q9USI6"/>
<dbReference type="OMA" id="RCYFASK"/>
<dbReference type="PhylomeDB" id="Q9USI6"/>
<dbReference type="Reactome" id="R-SPO-5627123">
    <property type="pathway name" value="RHO GTPases activate PAKs"/>
</dbReference>
<dbReference type="PRO" id="PR:Q9USI6"/>
<dbReference type="Proteomes" id="UP000002485">
    <property type="component" value="Chromosome III"/>
</dbReference>
<dbReference type="GO" id="GO:0032153">
    <property type="term" value="C:cell division site"/>
    <property type="evidence" value="ECO:0000314"/>
    <property type="project" value="PomBase"/>
</dbReference>
<dbReference type="GO" id="GO:0030863">
    <property type="term" value="C:cortical cytoskeleton"/>
    <property type="evidence" value="ECO:0000314"/>
    <property type="project" value="PomBase"/>
</dbReference>
<dbReference type="GO" id="GO:0005737">
    <property type="term" value="C:cytoplasm"/>
    <property type="evidence" value="ECO:0000314"/>
    <property type="project" value="PomBase"/>
</dbReference>
<dbReference type="GO" id="GO:0005829">
    <property type="term" value="C:cytosol"/>
    <property type="evidence" value="ECO:0000314"/>
    <property type="project" value="PomBase"/>
</dbReference>
<dbReference type="GO" id="GO:0031097">
    <property type="term" value="C:medial cortex"/>
    <property type="evidence" value="ECO:0000314"/>
    <property type="project" value="PomBase"/>
</dbReference>
<dbReference type="GO" id="GO:0036391">
    <property type="term" value="C:medial cortex septin ring"/>
    <property type="evidence" value="ECO:0000314"/>
    <property type="project" value="PomBase"/>
</dbReference>
<dbReference type="GO" id="GO:0071341">
    <property type="term" value="C:medial cortical node"/>
    <property type="evidence" value="ECO:0000314"/>
    <property type="project" value="PomBase"/>
</dbReference>
<dbReference type="GO" id="GO:0110085">
    <property type="term" value="C:mitotic actomyosin contractile ring"/>
    <property type="evidence" value="ECO:0000314"/>
    <property type="project" value="PomBase"/>
</dbReference>
<dbReference type="GO" id="GO:0120106">
    <property type="term" value="C:mitotic actomyosin contractile ring, distal actin filament layer"/>
    <property type="evidence" value="ECO:0000314"/>
    <property type="project" value="PomBase"/>
</dbReference>
<dbReference type="GO" id="GO:0120105">
    <property type="term" value="C:mitotic actomyosin contractile ring, intermediate layer"/>
    <property type="evidence" value="ECO:0000314"/>
    <property type="project" value="PomBase"/>
</dbReference>
<dbReference type="GO" id="GO:0120104">
    <property type="term" value="C:mitotic actomyosin contractile ring, proximal layer"/>
    <property type="evidence" value="ECO:0000314"/>
    <property type="project" value="PomBase"/>
</dbReference>
<dbReference type="GO" id="GO:0032982">
    <property type="term" value="C:myosin filament"/>
    <property type="evidence" value="ECO:0000318"/>
    <property type="project" value="GO_Central"/>
</dbReference>
<dbReference type="GO" id="GO:0016460">
    <property type="term" value="C:myosin II complex"/>
    <property type="evidence" value="ECO:0000314"/>
    <property type="project" value="PomBase"/>
</dbReference>
<dbReference type="GO" id="GO:0005634">
    <property type="term" value="C:nucleus"/>
    <property type="evidence" value="ECO:0007005"/>
    <property type="project" value="PomBase"/>
</dbReference>
<dbReference type="GO" id="GO:0051015">
    <property type="term" value="F:actin filament binding"/>
    <property type="evidence" value="ECO:0000318"/>
    <property type="project" value="GO_Central"/>
</dbReference>
<dbReference type="GO" id="GO:0005524">
    <property type="term" value="F:ATP binding"/>
    <property type="evidence" value="ECO:0000255"/>
    <property type="project" value="PomBase"/>
</dbReference>
<dbReference type="GO" id="GO:0016887">
    <property type="term" value="F:ATP hydrolysis activity"/>
    <property type="evidence" value="ECO:0000305"/>
    <property type="project" value="PomBase"/>
</dbReference>
<dbReference type="GO" id="GO:0030899">
    <property type="term" value="F:calcium-dependent ATPase activity"/>
    <property type="evidence" value="ECO:0000314"/>
    <property type="project" value="PomBase"/>
</dbReference>
<dbReference type="GO" id="GO:0005516">
    <property type="term" value="F:calmodulin binding"/>
    <property type="evidence" value="ECO:0007669"/>
    <property type="project" value="UniProtKB-KW"/>
</dbReference>
<dbReference type="GO" id="GO:0000146">
    <property type="term" value="F:microfilament motor activity"/>
    <property type="evidence" value="ECO:0000314"/>
    <property type="project" value="PomBase"/>
</dbReference>
<dbReference type="GO" id="GO:1903475">
    <property type="term" value="P:mitotic actomyosin contractile ring assembly"/>
    <property type="evidence" value="ECO:0000315"/>
    <property type="project" value="PomBase"/>
</dbReference>
<dbReference type="GO" id="GO:1902404">
    <property type="term" value="P:mitotic actomyosin contractile ring contraction"/>
    <property type="evidence" value="ECO:0000315"/>
    <property type="project" value="PomBase"/>
</dbReference>
<dbReference type="GO" id="GO:0000281">
    <property type="term" value="P:mitotic cytokinesis"/>
    <property type="evidence" value="ECO:0000315"/>
    <property type="project" value="PomBase"/>
</dbReference>
<dbReference type="CDD" id="cd01377">
    <property type="entry name" value="MYSc_class_II"/>
    <property type="match status" value="1"/>
</dbReference>
<dbReference type="FunFam" id="1.10.10.820:FF:000001">
    <property type="entry name" value="Myosin heavy chain"/>
    <property type="match status" value="1"/>
</dbReference>
<dbReference type="FunFam" id="1.20.58.530:FF:000001">
    <property type="entry name" value="Myosin heavy chain"/>
    <property type="match status" value="1"/>
</dbReference>
<dbReference type="Gene3D" id="1.10.10.820">
    <property type="match status" value="1"/>
</dbReference>
<dbReference type="Gene3D" id="1.20.5.4820">
    <property type="match status" value="1"/>
</dbReference>
<dbReference type="Gene3D" id="1.20.58.530">
    <property type="match status" value="1"/>
</dbReference>
<dbReference type="Gene3D" id="3.40.850.10">
    <property type="entry name" value="Kinesin motor domain"/>
    <property type="match status" value="1"/>
</dbReference>
<dbReference type="Gene3D" id="2.30.30.360">
    <property type="entry name" value="Myosin S1 fragment, N-terminal"/>
    <property type="match status" value="1"/>
</dbReference>
<dbReference type="Gene3D" id="1.20.120.720">
    <property type="entry name" value="Myosin VI head, motor domain, U50 subdomain"/>
    <property type="match status" value="1"/>
</dbReference>
<dbReference type="InterPro" id="IPR036961">
    <property type="entry name" value="Kinesin_motor_dom_sf"/>
</dbReference>
<dbReference type="InterPro" id="IPR001609">
    <property type="entry name" value="Myosin_head_motor_dom-like"/>
</dbReference>
<dbReference type="InterPro" id="IPR004009">
    <property type="entry name" value="Myosin_N"/>
</dbReference>
<dbReference type="InterPro" id="IPR008989">
    <property type="entry name" value="Myosin_S1_N"/>
</dbReference>
<dbReference type="InterPro" id="IPR027417">
    <property type="entry name" value="P-loop_NTPase"/>
</dbReference>
<dbReference type="PANTHER" id="PTHR13140">
    <property type="entry name" value="MYOSIN"/>
    <property type="match status" value="1"/>
</dbReference>
<dbReference type="PANTHER" id="PTHR13140:SF857">
    <property type="entry name" value="MYOSIN-11"/>
    <property type="match status" value="1"/>
</dbReference>
<dbReference type="Pfam" id="PF00063">
    <property type="entry name" value="Myosin_head"/>
    <property type="match status" value="1"/>
</dbReference>
<dbReference type="Pfam" id="PF02736">
    <property type="entry name" value="Myosin_N"/>
    <property type="match status" value="1"/>
</dbReference>
<dbReference type="PRINTS" id="PR00193">
    <property type="entry name" value="MYOSINHEAVY"/>
</dbReference>
<dbReference type="SMART" id="SM00242">
    <property type="entry name" value="MYSc"/>
    <property type="match status" value="1"/>
</dbReference>
<dbReference type="SUPFAM" id="SSF52540">
    <property type="entry name" value="P-loop containing nucleoside triphosphate hydrolases"/>
    <property type="match status" value="1"/>
</dbReference>
<dbReference type="PROSITE" id="PS50096">
    <property type="entry name" value="IQ"/>
    <property type="match status" value="1"/>
</dbReference>
<dbReference type="PROSITE" id="PS51456">
    <property type="entry name" value="MYOSIN_MOTOR"/>
    <property type="match status" value="1"/>
</dbReference>
<dbReference type="PROSITE" id="PS51844">
    <property type="entry name" value="SH3_LIKE"/>
    <property type="match status" value="1"/>
</dbReference>
<proteinExistence type="evidence at protein level"/>
<reference key="1">
    <citation type="journal article" date="1997" name="Cell Motil. Cytoskeleton">
        <title>Type II myosin involved in cytokinesis in the fission yeast, Schizosaccharomyces pombe.</title>
        <authorList>
            <person name="May K.M."/>
            <person name="Watts F.Z."/>
            <person name="Jones N."/>
            <person name="Hyams J.S."/>
        </authorList>
    </citation>
    <scope>NUCLEOTIDE SEQUENCE [GENOMIC DNA]</scope>
    <scope>FUNCTION</scope>
    <source>
        <strain>972 / ATCC 24843</strain>
    </source>
</reference>
<reference key="2">
    <citation type="journal article" date="2002" name="Nature">
        <title>The genome sequence of Schizosaccharomyces pombe.</title>
        <authorList>
            <person name="Wood V."/>
            <person name="Gwilliam R."/>
            <person name="Rajandream M.A."/>
            <person name="Lyne M.H."/>
            <person name="Lyne R."/>
            <person name="Stewart A."/>
            <person name="Sgouros J.G."/>
            <person name="Peat N."/>
            <person name="Hayles J."/>
            <person name="Baker S.G."/>
            <person name="Basham D."/>
            <person name="Bowman S."/>
            <person name="Brooks K."/>
            <person name="Brown D."/>
            <person name="Brown S."/>
            <person name="Chillingworth T."/>
            <person name="Churcher C.M."/>
            <person name="Collins M."/>
            <person name="Connor R."/>
            <person name="Cronin A."/>
            <person name="Davis P."/>
            <person name="Feltwell T."/>
            <person name="Fraser A."/>
            <person name="Gentles S."/>
            <person name="Goble A."/>
            <person name="Hamlin N."/>
            <person name="Harris D.E."/>
            <person name="Hidalgo J."/>
            <person name="Hodgson G."/>
            <person name="Holroyd S."/>
            <person name="Hornsby T."/>
            <person name="Howarth S."/>
            <person name="Huckle E.J."/>
            <person name="Hunt S."/>
            <person name="Jagels K."/>
            <person name="James K.D."/>
            <person name="Jones L."/>
            <person name="Jones M."/>
            <person name="Leather S."/>
            <person name="McDonald S."/>
            <person name="McLean J."/>
            <person name="Mooney P."/>
            <person name="Moule S."/>
            <person name="Mungall K.L."/>
            <person name="Murphy L.D."/>
            <person name="Niblett D."/>
            <person name="Odell C."/>
            <person name="Oliver K."/>
            <person name="O'Neil S."/>
            <person name="Pearson D."/>
            <person name="Quail M.A."/>
            <person name="Rabbinowitsch E."/>
            <person name="Rutherford K.M."/>
            <person name="Rutter S."/>
            <person name="Saunders D."/>
            <person name="Seeger K."/>
            <person name="Sharp S."/>
            <person name="Skelton J."/>
            <person name="Simmonds M.N."/>
            <person name="Squares R."/>
            <person name="Squares S."/>
            <person name="Stevens K."/>
            <person name="Taylor K."/>
            <person name="Taylor R.G."/>
            <person name="Tivey A."/>
            <person name="Walsh S.V."/>
            <person name="Warren T."/>
            <person name="Whitehead S."/>
            <person name="Woodward J.R."/>
            <person name="Volckaert G."/>
            <person name="Aert R."/>
            <person name="Robben J."/>
            <person name="Grymonprez B."/>
            <person name="Weltjens I."/>
            <person name="Vanstreels E."/>
            <person name="Rieger M."/>
            <person name="Schaefer M."/>
            <person name="Mueller-Auer S."/>
            <person name="Gabel C."/>
            <person name="Fuchs M."/>
            <person name="Duesterhoeft A."/>
            <person name="Fritzc C."/>
            <person name="Holzer E."/>
            <person name="Moestl D."/>
            <person name="Hilbert H."/>
            <person name="Borzym K."/>
            <person name="Langer I."/>
            <person name="Beck A."/>
            <person name="Lehrach H."/>
            <person name="Reinhardt R."/>
            <person name="Pohl T.M."/>
            <person name="Eger P."/>
            <person name="Zimmermann W."/>
            <person name="Wedler H."/>
            <person name="Wambutt R."/>
            <person name="Purnelle B."/>
            <person name="Goffeau A."/>
            <person name="Cadieu E."/>
            <person name="Dreano S."/>
            <person name="Gloux S."/>
            <person name="Lelaure V."/>
            <person name="Mottier S."/>
            <person name="Galibert F."/>
            <person name="Aves S.J."/>
            <person name="Xiang Z."/>
            <person name="Hunt C."/>
            <person name="Moore K."/>
            <person name="Hurst S.M."/>
            <person name="Lucas M."/>
            <person name="Rochet M."/>
            <person name="Gaillardin C."/>
            <person name="Tallada V.A."/>
            <person name="Garzon A."/>
            <person name="Thode G."/>
            <person name="Daga R.R."/>
            <person name="Cruzado L."/>
            <person name="Jimenez J."/>
            <person name="Sanchez M."/>
            <person name="del Rey F."/>
            <person name="Benito J."/>
            <person name="Dominguez A."/>
            <person name="Revuelta J.L."/>
            <person name="Moreno S."/>
            <person name="Armstrong J."/>
            <person name="Forsburg S.L."/>
            <person name="Cerutti L."/>
            <person name="Lowe T."/>
            <person name="McCombie W.R."/>
            <person name="Paulsen I."/>
            <person name="Potashkin J."/>
            <person name="Shpakovski G.V."/>
            <person name="Ussery D."/>
            <person name="Barrell B.G."/>
            <person name="Nurse P."/>
        </authorList>
    </citation>
    <scope>NUCLEOTIDE SEQUENCE [LARGE SCALE GENOMIC DNA]</scope>
    <source>
        <strain>972 / ATCC 24843</strain>
    </source>
</reference>
<reference key="3">
    <citation type="journal article" date="2008" name="J. Proteome Res.">
        <title>Phosphoproteome analysis of fission yeast.</title>
        <authorList>
            <person name="Wilson-Grady J.T."/>
            <person name="Villen J."/>
            <person name="Gygi S.P."/>
        </authorList>
    </citation>
    <scope>PHOSPHORYLATION [LARGE SCALE ANALYSIS] AT SER-1044</scope>
    <scope>IDENTIFICATION BY MASS SPECTROMETRY</scope>
</reference>
<name>MYO2_SCHPO</name>
<gene>
    <name type="primary">myo2</name>
    <name type="ORF">SPCC645.05c</name>
</gene>
<keyword id="KW-0009">Actin-binding</keyword>
<keyword id="KW-0067">ATP-binding</keyword>
<keyword id="KW-0112">Calmodulin-binding</keyword>
<keyword id="KW-0175">Coiled coil</keyword>
<keyword id="KW-0505">Motor protein</keyword>
<keyword id="KW-0518">Myosin</keyword>
<keyword id="KW-0547">Nucleotide-binding</keyword>
<keyword id="KW-0597">Phosphoprotein</keyword>
<keyword id="KW-1185">Reference proteome</keyword>
<evidence type="ECO:0000250" key="1"/>
<evidence type="ECO:0000255" key="2"/>
<evidence type="ECO:0000255" key="3">
    <source>
        <dbReference type="PROSITE-ProRule" id="PRU00116"/>
    </source>
</evidence>
<evidence type="ECO:0000255" key="4">
    <source>
        <dbReference type="PROSITE-ProRule" id="PRU00782"/>
    </source>
</evidence>
<evidence type="ECO:0000255" key="5">
    <source>
        <dbReference type="PROSITE-ProRule" id="PRU01190"/>
    </source>
</evidence>
<evidence type="ECO:0000269" key="6">
    <source>
    </source>
</evidence>
<evidence type="ECO:0000269" key="7">
    <source>
    </source>
</evidence>
<evidence type="ECO:0000305" key="8"/>
<protein>
    <recommendedName>
        <fullName>Myosin type-2 heavy chain 1</fullName>
    </recommendedName>
    <alternativeName>
        <fullName>Myosin type II heavy chain 1</fullName>
    </alternativeName>
</protein>